<dbReference type="EC" id="3.4.11.1" evidence="1"/>
<dbReference type="EC" id="3.4.11.10" evidence="1"/>
<dbReference type="EMBL" id="CP000240">
    <property type="protein sequence ID" value="ABD02774.1"/>
    <property type="molecule type" value="Genomic_DNA"/>
</dbReference>
<dbReference type="RefSeq" id="WP_011433415.1">
    <property type="nucleotide sequence ID" value="NC_007776.1"/>
</dbReference>
<dbReference type="SMR" id="Q2JKL5"/>
<dbReference type="STRING" id="321332.CYB_1818"/>
<dbReference type="MEROPS" id="M17.A03"/>
<dbReference type="KEGG" id="cyb:CYB_1818"/>
<dbReference type="eggNOG" id="COG0260">
    <property type="taxonomic scope" value="Bacteria"/>
</dbReference>
<dbReference type="HOGENOM" id="CLU_013734_5_1_3"/>
<dbReference type="OrthoDB" id="9809354at2"/>
<dbReference type="Proteomes" id="UP000001938">
    <property type="component" value="Chromosome"/>
</dbReference>
<dbReference type="GO" id="GO:0005737">
    <property type="term" value="C:cytoplasm"/>
    <property type="evidence" value="ECO:0007669"/>
    <property type="project" value="UniProtKB-SubCell"/>
</dbReference>
<dbReference type="GO" id="GO:0030145">
    <property type="term" value="F:manganese ion binding"/>
    <property type="evidence" value="ECO:0007669"/>
    <property type="project" value="UniProtKB-UniRule"/>
</dbReference>
<dbReference type="GO" id="GO:0070006">
    <property type="term" value="F:metalloaminopeptidase activity"/>
    <property type="evidence" value="ECO:0007669"/>
    <property type="project" value="InterPro"/>
</dbReference>
<dbReference type="GO" id="GO:0006508">
    <property type="term" value="P:proteolysis"/>
    <property type="evidence" value="ECO:0007669"/>
    <property type="project" value="UniProtKB-KW"/>
</dbReference>
<dbReference type="CDD" id="cd00433">
    <property type="entry name" value="Peptidase_M17"/>
    <property type="match status" value="1"/>
</dbReference>
<dbReference type="Gene3D" id="3.40.220.10">
    <property type="entry name" value="Leucine Aminopeptidase, subunit E, domain 1"/>
    <property type="match status" value="1"/>
</dbReference>
<dbReference type="Gene3D" id="3.40.630.10">
    <property type="entry name" value="Zn peptidases"/>
    <property type="match status" value="1"/>
</dbReference>
<dbReference type="HAMAP" id="MF_00181">
    <property type="entry name" value="Cytosol_peptidase_M17"/>
    <property type="match status" value="1"/>
</dbReference>
<dbReference type="InterPro" id="IPR011356">
    <property type="entry name" value="Leucine_aapep/pepB"/>
</dbReference>
<dbReference type="InterPro" id="IPR043472">
    <property type="entry name" value="Macro_dom-like"/>
</dbReference>
<dbReference type="InterPro" id="IPR000819">
    <property type="entry name" value="Peptidase_M17_C"/>
</dbReference>
<dbReference type="InterPro" id="IPR023042">
    <property type="entry name" value="Peptidase_M17_leu_NH2_pept"/>
</dbReference>
<dbReference type="InterPro" id="IPR008283">
    <property type="entry name" value="Peptidase_M17_N"/>
</dbReference>
<dbReference type="NCBIfam" id="NF002074">
    <property type="entry name" value="PRK00913.1-4"/>
    <property type="match status" value="1"/>
</dbReference>
<dbReference type="NCBIfam" id="NF002076">
    <property type="entry name" value="PRK00913.2-3"/>
    <property type="match status" value="1"/>
</dbReference>
<dbReference type="NCBIfam" id="NF002083">
    <property type="entry name" value="PRK00913.3-5"/>
    <property type="match status" value="1"/>
</dbReference>
<dbReference type="PANTHER" id="PTHR11963:SF23">
    <property type="entry name" value="CYTOSOL AMINOPEPTIDASE"/>
    <property type="match status" value="1"/>
</dbReference>
<dbReference type="PANTHER" id="PTHR11963">
    <property type="entry name" value="LEUCINE AMINOPEPTIDASE-RELATED"/>
    <property type="match status" value="1"/>
</dbReference>
<dbReference type="Pfam" id="PF00883">
    <property type="entry name" value="Peptidase_M17"/>
    <property type="match status" value="1"/>
</dbReference>
<dbReference type="Pfam" id="PF02789">
    <property type="entry name" value="Peptidase_M17_N"/>
    <property type="match status" value="1"/>
</dbReference>
<dbReference type="PRINTS" id="PR00481">
    <property type="entry name" value="LAMNOPPTDASE"/>
</dbReference>
<dbReference type="SUPFAM" id="SSF52949">
    <property type="entry name" value="Macro domain-like"/>
    <property type="match status" value="1"/>
</dbReference>
<dbReference type="SUPFAM" id="SSF53187">
    <property type="entry name" value="Zn-dependent exopeptidases"/>
    <property type="match status" value="1"/>
</dbReference>
<dbReference type="PROSITE" id="PS00631">
    <property type="entry name" value="CYTOSOL_AP"/>
    <property type="match status" value="1"/>
</dbReference>
<reference key="1">
    <citation type="journal article" date="2007" name="ISME J.">
        <title>Population level functional diversity in a microbial community revealed by comparative genomic and metagenomic analyses.</title>
        <authorList>
            <person name="Bhaya D."/>
            <person name="Grossman A.R."/>
            <person name="Steunou A.-S."/>
            <person name="Khuri N."/>
            <person name="Cohan F.M."/>
            <person name="Hamamura N."/>
            <person name="Melendrez M.C."/>
            <person name="Bateson M.M."/>
            <person name="Ward D.M."/>
            <person name="Heidelberg J.F."/>
        </authorList>
    </citation>
    <scope>NUCLEOTIDE SEQUENCE [LARGE SCALE GENOMIC DNA]</scope>
    <source>
        <strain>JA-2-3B'a(2-13)</strain>
    </source>
</reference>
<feature type="chain" id="PRO_1000019989" description="Probable cytosol aminopeptidase">
    <location>
        <begin position="1"/>
        <end position="510"/>
    </location>
</feature>
<feature type="active site" evidence="1">
    <location>
        <position position="284"/>
    </location>
</feature>
<feature type="active site" evidence="1">
    <location>
        <position position="359"/>
    </location>
</feature>
<feature type="binding site" evidence="1">
    <location>
        <position position="272"/>
    </location>
    <ligand>
        <name>Mn(2+)</name>
        <dbReference type="ChEBI" id="CHEBI:29035"/>
        <label>2</label>
    </ligand>
</feature>
<feature type="binding site" evidence="1">
    <location>
        <position position="277"/>
    </location>
    <ligand>
        <name>Mn(2+)</name>
        <dbReference type="ChEBI" id="CHEBI:29035"/>
        <label>1</label>
    </ligand>
</feature>
<feature type="binding site" evidence="1">
    <location>
        <position position="277"/>
    </location>
    <ligand>
        <name>Mn(2+)</name>
        <dbReference type="ChEBI" id="CHEBI:29035"/>
        <label>2</label>
    </ligand>
</feature>
<feature type="binding site" evidence="1">
    <location>
        <position position="296"/>
    </location>
    <ligand>
        <name>Mn(2+)</name>
        <dbReference type="ChEBI" id="CHEBI:29035"/>
        <label>2</label>
    </ligand>
</feature>
<feature type="binding site" evidence="1">
    <location>
        <position position="355"/>
    </location>
    <ligand>
        <name>Mn(2+)</name>
        <dbReference type="ChEBI" id="CHEBI:29035"/>
        <label>1</label>
    </ligand>
</feature>
<feature type="binding site" evidence="1">
    <location>
        <position position="357"/>
    </location>
    <ligand>
        <name>Mn(2+)</name>
        <dbReference type="ChEBI" id="CHEBI:29035"/>
        <label>1</label>
    </ligand>
</feature>
<feature type="binding site" evidence="1">
    <location>
        <position position="357"/>
    </location>
    <ligand>
        <name>Mn(2+)</name>
        <dbReference type="ChEBI" id="CHEBI:29035"/>
        <label>2</label>
    </ligand>
</feature>
<proteinExistence type="inferred from homology"/>
<protein>
    <recommendedName>
        <fullName evidence="1">Probable cytosol aminopeptidase</fullName>
        <ecNumber evidence="1">3.4.11.1</ecNumber>
    </recommendedName>
    <alternativeName>
        <fullName evidence="1">Leucine aminopeptidase</fullName>
        <shortName evidence="1">LAP</shortName>
        <ecNumber evidence="1">3.4.11.10</ecNumber>
    </alternativeName>
    <alternativeName>
        <fullName evidence="1">Leucyl aminopeptidase</fullName>
    </alternativeName>
</protein>
<gene>
    <name evidence="1" type="primary">pepA</name>
    <name type="ordered locus">CYB_1818</name>
</gene>
<accession>Q2JKL5</accession>
<organism>
    <name type="scientific">Synechococcus sp. (strain JA-2-3B'a(2-13))</name>
    <name type="common">Cyanobacteria bacterium Yellowstone B-Prime</name>
    <dbReference type="NCBI Taxonomy" id="321332"/>
    <lineage>
        <taxon>Bacteria</taxon>
        <taxon>Bacillati</taxon>
        <taxon>Cyanobacteriota</taxon>
        <taxon>Cyanophyceae</taxon>
        <taxon>Synechococcales</taxon>
        <taxon>Synechococcaceae</taxon>
        <taxon>Synechococcus</taxon>
    </lineage>
</organism>
<evidence type="ECO:0000255" key="1">
    <source>
        <dbReference type="HAMAP-Rule" id="MF_00181"/>
    </source>
</evidence>
<name>AMPA_SYNJB</name>
<sequence>MQLHLSEPPLTQGECALVYCFAASGGNGRFPLPPEIASWDEKAWSGLVAETVQEQGFQGKPNSSVALRLTGEIRKLVLVGLGDPAALTLEALRRATANGLRQAHSLKAKQVMLSLPETGLDRVRGVQAVAEACLLVAHRDNRFKSSAKGEEENSFSVQEVTLLVPGLAQARPDYEVALQRAIEMAAGTILARELVAAPANIVTPLALADTARQLAQEYGLEVEILGQEECEALGMGAFLGVAKASDLPPQFIHLTYKPAQGDPVTKLALVGKGLTFDSGGLNIKTDSRSIAMMKTDMGGAAAVLGAARALAALKPQVELHFIVAATENMISGHAIHPGDILTASNQKTIEVNNTDAEGRLTLADALVFAEKLGVDAILDLATLTGACVIALGEEIAGLFTPDETLAQELQQAANLSGEKIWRLPLEEGYFEGLSSIVADMKNTGPRSGGSITAALFLKQFVEKTPWAHLDIAGPVWTEKDAGYNNKGATGYGVRTLVEWVLARQAAAACS</sequence>
<keyword id="KW-0031">Aminopeptidase</keyword>
<keyword id="KW-0963">Cytoplasm</keyword>
<keyword id="KW-0378">Hydrolase</keyword>
<keyword id="KW-0464">Manganese</keyword>
<keyword id="KW-0479">Metal-binding</keyword>
<keyword id="KW-0645">Protease</keyword>
<keyword id="KW-1185">Reference proteome</keyword>
<comment type="function">
    <text evidence="1">Presumably involved in the processing and regular turnover of intracellular proteins. Catalyzes the removal of unsubstituted N-terminal amino acids from various peptides.</text>
</comment>
<comment type="catalytic activity">
    <reaction evidence="1">
        <text>Release of an N-terminal amino acid, Xaa-|-Yaa-, in which Xaa is preferably Leu, but may be other amino acids including Pro although not Arg or Lys, and Yaa may be Pro. Amino acid amides and methyl esters are also readily hydrolyzed, but rates on arylamides are exceedingly low.</text>
        <dbReference type="EC" id="3.4.11.1"/>
    </reaction>
</comment>
<comment type="catalytic activity">
    <reaction evidence="1">
        <text>Release of an N-terminal amino acid, preferentially leucine, but not glutamic or aspartic acids.</text>
        <dbReference type="EC" id="3.4.11.10"/>
    </reaction>
</comment>
<comment type="cofactor">
    <cofactor evidence="1">
        <name>Mn(2+)</name>
        <dbReference type="ChEBI" id="CHEBI:29035"/>
    </cofactor>
    <text evidence="1">Binds 2 manganese ions per subunit.</text>
</comment>
<comment type="subcellular location">
    <subcellularLocation>
        <location evidence="1">Cytoplasm</location>
    </subcellularLocation>
</comment>
<comment type="similarity">
    <text evidence="1">Belongs to the peptidase M17 family.</text>
</comment>